<evidence type="ECO:0000255" key="1">
    <source>
        <dbReference type="HAMAP-Rule" id="MF_01452"/>
    </source>
</evidence>
<accession>A3DH20</accession>
<protein>
    <recommendedName>
        <fullName evidence="1">ATP-dependent helicase/deoxyribonuclease subunit B</fullName>
        <ecNumber evidence="1">3.1.-.-</ecNumber>
    </recommendedName>
    <alternativeName>
        <fullName evidence="1">ATP-dependent helicase/nuclease subunit AddB</fullName>
    </alternativeName>
</protein>
<feature type="chain" id="PRO_0000379185" description="ATP-dependent helicase/deoxyribonuclease subunit B">
    <location>
        <begin position="1"/>
        <end position="1146"/>
    </location>
</feature>
<feature type="domain" description="UvrD-like helicase ATP-binding" evidence="1">
    <location>
        <begin position="1"/>
        <end position="280"/>
    </location>
</feature>
<feature type="domain" description="UvrD-like helicase C-terminal" evidence="1">
    <location>
        <begin position="276"/>
        <end position="584"/>
    </location>
</feature>
<feature type="binding site" evidence="1">
    <location>
        <begin position="8"/>
        <end position="15"/>
    </location>
    <ligand>
        <name>ATP</name>
        <dbReference type="ChEBI" id="CHEBI:30616"/>
    </ligand>
</feature>
<feature type="binding site" evidence="1">
    <location>
        <position position="786"/>
    </location>
    <ligand>
        <name>[4Fe-4S] cluster</name>
        <dbReference type="ChEBI" id="CHEBI:49883"/>
    </ligand>
</feature>
<feature type="binding site" evidence="1">
    <location>
        <position position="1105"/>
    </location>
    <ligand>
        <name>[4Fe-4S] cluster</name>
        <dbReference type="ChEBI" id="CHEBI:49883"/>
    </ligand>
</feature>
<feature type="binding site" evidence="1">
    <location>
        <position position="1108"/>
    </location>
    <ligand>
        <name>[4Fe-4S] cluster</name>
        <dbReference type="ChEBI" id="CHEBI:49883"/>
    </ligand>
</feature>
<feature type="binding site" evidence="1">
    <location>
        <position position="1114"/>
    </location>
    <ligand>
        <name>[4Fe-4S] cluster</name>
        <dbReference type="ChEBI" id="CHEBI:49883"/>
    </ligand>
</feature>
<name>ADDB_ACET2</name>
<organism>
    <name type="scientific">Acetivibrio thermocellus (strain ATCC 27405 / DSM 1237 / JCM 9322 / NBRC 103400 / NCIMB 10682 / NRRL B-4536 / VPI 7372)</name>
    <name type="common">Clostridium thermocellum</name>
    <dbReference type="NCBI Taxonomy" id="203119"/>
    <lineage>
        <taxon>Bacteria</taxon>
        <taxon>Bacillati</taxon>
        <taxon>Bacillota</taxon>
        <taxon>Clostridia</taxon>
        <taxon>Eubacteriales</taxon>
        <taxon>Oscillospiraceae</taxon>
        <taxon>Acetivibrio</taxon>
    </lineage>
</organism>
<dbReference type="EC" id="3.1.-.-" evidence="1"/>
<dbReference type="EMBL" id="CP000568">
    <property type="protein sequence ID" value="ABN53249.1"/>
    <property type="molecule type" value="Genomic_DNA"/>
</dbReference>
<dbReference type="RefSeq" id="WP_003514090.1">
    <property type="nucleotide sequence ID" value="NC_009012.1"/>
</dbReference>
<dbReference type="SMR" id="A3DH20"/>
<dbReference type="STRING" id="203119.Cthe_2040"/>
<dbReference type="GeneID" id="35804716"/>
<dbReference type="KEGG" id="cth:Cthe_2040"/>
<dbReference type="eggNOG" id="COG3857">
    <property type="taxonomic scope" value="Bacteria"/>
</dbReference>
<dbReference type="HOGENOM" id="CLU_007838_0_0_9"/>
<dbReference type="OrthoDB" id="9758506at2"/>
<dbReference type="Proteomes" id="UP000002145">
    <property type="component" value="Chromosome"/>
</dbReference>
<dbReference type="GO" id="GO:0051539">
    <property type="term" value="F:4 iron, 4 sulfur cluster binding"/>
    <property type="evidence" value="ECO:0007669"/>
    <property type="project" value="UniProtKB-KW"/>
</dbReference>
<dbReference type="GO" id="GO:0008409">
    <property type="term" value="F:5'-3' exonuclease activity"/>
    <property type="evidence" value="ECO:0007669"/>
    <property type="project" value="UniProtKB-UniRule"/>
</dbReference>
<dbReference type="GO" id="GO:0005524">
    <property type="term" value="F:ATP binding"/>
    <property type="evidence" value="ECO:0007669"/>
    <property type="project" value="UniProtKB-UniRule"/>
</dbReference>
<dbReference type="GO" id="GO:0003690">
    <property type="term" value="F:double-stranded DNA binding"/>
    <property type="evidence" value="ECO:0007669"/>
    <property type="project" value="UniProtKB-UniRule"/>
</dbReference>
<dbReference type="GO" id="GO:0004386">
    <property type="term" value="F:helicase activity"/>
    <property type="evidence" value="ECO:0007669"/>
    <property type="project" value="UniProtKB-KW"/>
</dbReference>
<dbReference type="GO" id="GO:0046872">
    <property type="term" value="F:metal ion binding"/>
    <property type="evidence" value="ECO:0007669"/>
    <property type="project" value="UniProtKB-KW"/>
</dbReference>
<dbReference type="GO" id="GO:0000724">
    <property type="term" value="P:double-strand break repair via homologous recombination"/>
    <property type="evidence" value="ECO:0007669"/>
    <property type="project" value="UniProtKB-UniRule"/>
</dbReference>
<dbReference type="Gene3D" id="3.90.320.10">
    <property type="match status" value="1"/>
</dbReference>
<dbReference type="Gene3D" id="6.10.140.1030">
    <property type="match status" value="1"/>
</dbReference>
<dbReference type="Gene3D" id="3.40.50.300">
    <property type="entry name" value="P-loop containing nucleotide triphosphate hydrolases"/>
    <property type="match status" value="3"/>
</dbReference>
<dbReference type="HAMAP" id="MF_01452">
    <property type="entry name" value="AddB_type1"/>
    <property type="match status" value="1"/>
</dbReference>
<dbReference type="InterPro" id="IPR049035">
    <property type="entry name" value="ADDB_N"/>
</dbReference>
<dbReference type="InterPro" id="IPR014140">
    <property type="entry name" value="DNA_helicase_suAddB"/>
</dbReference>
<dbReference type="InterPro" id="IPR014017">
    <property type="entry name" value="DNA_helicase_UvrD-like_C"/>
</dbReference>
<dbReference type="InterPro" id="IPR027417">
    <property type="entry name" value="P-loop_NTPase"/>
</dbReference>
<dbReference type="InterPro" id="IPR011604">
    <property type="entry name" value="PDDEXK-like_dom_sf"/>
</dbReference>
<dbReference type="InterPro" id="IPR038726">
    <property type="entry name" value="PDDEXK_AddAB-type"/>
</dbReference>
<dbReference type="InterPro" id="IPR011335">
    <property type="entry name" value="Restrct_endonuc-II-like"/>
</dbReference>
<dbReference type="NCBIfam" id="TIGR02773">
    <property type="entry name" value="addB_Gpos"/>
    <property type="match status" value="1"/>
</dbReference>
<dbReference type="PANTHER" id="PTHR30591">
    <property type="entry name" value="RECBCD ENZYME SUBUNIT RECC"/>
    <property type="match status" value="1"/>
</dbReference>
<dbReference type="PANTHER" id="PTHR30591:SF1">
    <property type="entry name" value="RECBCD ENZYME SUBUNIT RECC"/>
    <property type="match status" value="1"/>
</dbReference>
<dbReference type="Pfam" id="PF21445">
    <property type="entry name" value="ADDB_N"/>
    <property type="match status" value="1"/>
</dbReference>
<dbReference type="Pfam" id="PF12705">
    <property type="entry name" value="PDDEXK_1"/>
    <property type="match status" value="1"/>
</dbReference>
<dbReference type="Pfam" id="PF13361">
    <property type="entry name" value="UvrD_C"/>
    <property type="match status" value="1"/>
</dbReference>
<dbReference type="SUPFAM" id="SSF52540">
    <property type="entry name" value="P-loop containing nucleoside triphosphate hydrolases"/>
    <property type="match status" value="1"/>
</dbReference>
<dbReference type="SUPFAM" id="SSF52980">
    <property type="entry name" value="Restriction endonuclease-like"/>
    <property type="match status" value="1"/>
</dbReference>
<dbReference type="PROSITE" id="PS51198">
    <property type="entry name" value="UVRD_HELICASE_ATP_BIND"/>
    <property type="match status" value="1"/>
</dbReference>
<dbReference type="PROSITE" id="PS51217">
    <property type="entry name" value="UVRD_HELICASE_CTER"/>
    <property type="match status" value="1"/>
</dbReference>
<comment type="function">
    <text evidence="1">The heterodimer acts as both an ATP-dependent DNA helicase and an ATP-dependent, dual-direction single-stranded exonuclease. Recognizes the chi site generating a DNA molecule suitable for the initiation of homologous recombination. The AddB subunit has 5' -&gt; 3' nuclease activity but not helicase activity.</text>
</comment>
<comment type="cofactor">
    <cofactor evidence="1">
        <name>Mg(2+)</name>
        <dbReference type="ChEBI" id="CHEBI:18420"/>
    </cofactor>
</comment>
<comment type="cofactor">
    <cofactor evidence="1">
        <name>[4Fe-4S] cluster</name>
        <dbReference type="ChEBI" id="CHEBI:49883"/>
    </cofactor>
    <text evidence="1">Binds 1 [4Fe-4S] cluster.</text>
</comment>
<comment type="subunit">
    <text evidence="1">Heterodimer of AddA and AddB.</text>
</comment>
<comment type="miscellaneous">
    <text evidence="1">Despite having conserved helicase domains, this subunit does not have helicase activity.</text>
</comment>
<comment type="similarity">
    <text evidence="1">Belongs to the helicase family. AddB/RexB type 1 subfamily.</text>
</comment>
<sequence>MSLRFIYGRAGSGKTRFCLEEIKSRITSKATHPLVLLVPEQFTFQAERDLISVLGTGGILKTEVLSFSRIAYRTFNEAGGITYPHIHSAGKCMILYRILDKMKGSFRVFSKTADRQGFVNTLSTLITEFKKYNVTPEDLEKVSKELEEDNPVKEKLMELTAIYDLFEKTIAERYRDPDDDLTLAAKKLGSIPLYDGAEIWIDGFTGFTPQEYQIIGQLMKKAQRVNISFCTDCLDGDLNDTDIFSSIKTAYRKLVKMAKENGIPVEPSVVLNSKPLFRFSQSPELSHLEQYLYAYPYKTYNEKTKDISLFSSVNIFAEVEACARDIVRLCRDRGMRYREIAVVTGNLDGYEKLIEAVFSEYGIPCFIDRKVDIVNHPLVRLIMSMLDIFIENWSYEAVFRYLKTGLTGIDRESIDRLENYVLACGIRGSCWTETEEWKMVPELIPNEKSLEEAKELLEDVNRIRAQVVAPLMEFRKKTKGRKKASDFCASLYDFLCTLGIPEKIEDAIEKFRESGNLNLANEYSQVWNAVMEVFDHTVEVMGDETFGIEKFARILEIGFGECKIGLIPASLDQVLVGSLERSRSHEIKALYILGANDGVFPPAVMEEGILSDQDRAVLNNAGIELASDTRTQAFDGQYLIYRALTTAGNYLRISWSIADHEGRTLRPSLVVFRLRKLFLNITETSNILPSGSLEEEMELLSGNSPAFKSMVSALRQKADGKEIKPVWQEAYRWFAVQDEWRGKCEALRAAFQYKNLAQPVSREKIAALYGEPAVSSVSRLEKYTACPFAFYVQYGLGAKERQIYSLRPPDVGTFMHAVIEKFSRMVAKRNISWRDLDRDWCSEKVSEIVDEMLEKMQGSGIAASRRYTALTLRLKRVVARAVWLIAEHIRRSSFEPVAYEVGFGENGKYPPIVIELDSGEKIHLTGRIDRVDALKTEDGTYLRIVDYKSGGKDFKLSDVFYGLQIQLITYLDALWESGEADENNPVLPGGVLYFKIDDPIIRGNGRMTEEEIEKAIMKQLRMKGLLLADVKLIREMDKDIEGSSMIIPATVNKDGSLGKNTSAATMEQFKLLRKYVRKLLKNLCEEIMKGNVSINPYKKKGTTSCKYCSFLPVCQFDTTMKENTFKLLYDKKDDEIWSLMAQEEEE</sequence>
<keyword id="KW-0004">4Fe-4S</keyword>
<keyword id="KW-0067">ATP-binding</keyword>
<keyword id="KW-0227">DNA damage</keyword>
<keyword id="KW-0234">DNA repair</keyword>
<keyword id="KW-0238">DNA-binding</keyword>
<keyword id="KW-0269">Exonuclease</keyword>
<keyword id="KW-0347">Helicase</keyword>
<keyword id="KW-0378">Hydrolase</keyword>
<keyword id="KW-0408">Iron</keyword>
<keyword id="KW-0411">Iron-sulfur</keyword>
<keyword id="KW-0479">Metal-binding</keyword>
<keyword id="KW-0540">Nuclease</keyword>
<keyword id="KW-0547">Nucleotide-binding</keyword>
<keyword id="KW-1185">Reference proteome</keyword>
<proteinExistence type="inferred from homology"/>
<gene>
    <name evidence="1" type="primary">addB</name>
    <name type="ordered locus">Cthe_2040</name>
</gene>
<reference key="1">
    <citation type="submission" date="2007-02" db="EMBL/GenBank/DDBJ databases">
        <title>Complete sequence of Clostridium thermocellum ATCC 27405.</title>
        <authorList>
            <consortium name="US DOE Joint Genome Institute"/>
            <person name="Copeland A."/>
            <person name="Lucas S."/>
            <person name="Lapidus A."/>
            <person name="Barry K."/>
            <person name="Detter J.C."/>
            <person name="Glavina del Rio T."/>
            <person name="Hammon N."/>
            <person name="Israni S."/>
            <person name="Dalin E."/>
            <person name="Tice H."/>
            <person name="Pitluck S."/>
            <person name="Chertkov O."/>
            <person name="Brettin T."/>
            <person name="Bruce D."/>
            <person name="Han C."/>
            <person name="Tapia R."/>
            <person name="Gilna P."/>
            <person name="Schmutz J."/>
            <person name="Larimer F."/>
            <person name="Land M."/>
            <person name="Hauser L."/>
            <person name="Kyrpides N."/>
            <person name="Mikhailova N."/>
            <person name="Wu J.H.D."/>
            <person name="Newcomb M."/>
            <person name="Richardson P."/>
        </authorList>
    </citation>
    <scope>NUCLEOTIDE SEQUENCE [LARGE SCALE GENOMIC DNA]</scope>
    <source>
        <strain>ATCC 27405 / DSM 1237 / JCM 9322 / NBRC 103400 / NCIMB 10682 / NRRL B-4536 / VPI 7372</strain>
    </source>
</reference>